<reference key="1">
    <citation type="journal article" date="2011" name="J. Bacteriol.">
        <title>Comparative genomics of 28 Salmonella enterica isolates: evidence for CRISPR-mediated adaptive sublineage evolution.</title>
        <authorList>
            <person name="Fricke W.F."/>
            <person name="Mammel M.K."/>
            <person name="McDermott P.F."/>
            <person name="Tartera C."/>
            <person name="White D.G."/>
            <person name="Leclerc J.E."/>
            <person name="Ravel J."/>
            <person name="Cebula T.A."/>
        </authorList>
    </citation>
    <scope>NUCLEOTIDE SEQUENCE [LARGE SCALE GENOMIC DNA]</scope>
    <source>
        <strain>CT_02021853</strain>
    </source>
</reference>
<keyword id="KW-0963">Cytoplasm</keyword>
<keyword id="KW-0521">NADP</keyword>
<keyword id="KW-0560">Oxidoreductase</keyword>
<keyword id="KW-0671">Queuosine biosynthesis</keyword>
<dbReference type="EC" id="1.7.1.13" evidence="1"/>
<dbReference type="EMBL" id="CP001144">
    <property type="protein sequence ID" value="ACH77763.1"/>
    <property type="molecule type" value="Genomic_DNA"/>
</dbReference>
<dbReference type="RefSeq" id="WP_000100463.1">
    <property type="nucleotide sequence ID" value="NC_011205.1"/>
</dbReference>
<dbReference type="SMR" id="B5FTX0"/>
<dbReference type="KEGG" id="sed:SeD_A3290"/>
<dbReference type="HOGENOM" id="CLU_054738_0_0_6"/>
<dbReference type="UniPathway" id="UPA00392"/>
<dbReference type="Proteomes" id="UP000008322">
    <property type="component" value="Chromosome"/>
</dbReference>
<dbReference type="GO" id="GO:0005737">
    <property type="term" value="C:cytoplasm"/>
    <property type="evidence" value="ECO:0007669"/>
    <property type="project" value="UniProtKB-SubCell"/>
</dbReference>
<dbReference type="GO" id="GO:0033739">
    <property type="term" value="F:preQ1 synthase activity"/>
    <property type="evidence" value="ECO:0007669"/>
    <property type="project" value="UniProtKB-UniRule"/>
</dbReference>
<dbReference type="GO" id="GO:0008616">
    <property type="term" value="P:queuosine biosynthetic process"/>
    <property type="evidence" value="ECO:0007669"/>
    <property type="project" value="UniProtKB-UniRule"/>
</dbReference>
<dbReference type="GO" id="GO:0006400">
    <property type="term" value="P:tRNA modification"/>
    <property type="evidence" value="ECO:0007669"/>
    <property type="project" value="UniProtKB-UniRule"/>
</dbReference>
<dbReference type="FunFam" id="3.30.1130.10:FF:000004">
    <property type="entry name" value="NADPH-dependent 7-cyano-7-deazaguanine reductase"/>
    <property type="match status" value="1"/>
</dbReference>
<dbReference type="Gene3D" id="3.30.1130.10">
    <property type="match status" value="2"/>
</dbReference>
<dbReference type="HAMAP" id="MF_00817">
    <property type="entry name" value="QueF_type2"/>
    <property type="match status" value="1"/>
</dbReference>
<dbReference type="InterPro" id="IPR043133">
    <property type="entry name" value="GTP-CH-I_C/QueF"/>
</dbReference>
<dbReference type="InterPro" id="IPR050084">
    <property type="entry name" value="NADPH_dep_7-cyano-7-deazaG_red"/>
</dbReference>
<dbReference type="InterPro" id="IPR029500">
    <property type="entry name" value="QueF"/>
</dbReference>
<dbReference type="InterPro" id="IPR029139">
    <property type="entry name" value="QueF_N"/>
</dbReference>
<dbReference type="InterPro" id="IPR016428">
    <property type="entry name" value="QueF_type2"/>
</dbReference>
<dbReference type="NCBIfam" id="TIGR03138">
    <property type="entry name" value="QueF"/>
    <property type="match status" value="1"/>
</dbReference>
<dbReference type="PANTHER" id="PTHR34354">
    <property type="entry name" value="NADPH-DEPENDENT 7-CYANO-7-DEAZAGUANINE REDUCTASE"/>
    <property type="match status" value="1"/>
</dbReference>
<dbReference type="PANTHER" id="PTHR34354:SF1">
    <property type="entry name" value="NADPH-DEPENDENT 7-CYANO-7-DEAZAGUANINE REDUCTASE"/>
    <property type="match status" value="1"/>
</dbReference>
<dbReference type="Pfam" id="PF14489">
    <property type="entry name" value="QueF"/>
    <property type="match status" value="1"/>
</dbReference>
<dbReference type="Pfam" id="PF14819">
    <property type="entry name" value="QueF_N"/>
    <property type="match status" value="1"/>
</dbReference>
<dbReference type="PIRSF" id="PIRSF004750">
    <property type="entry name" value="Nitrile_oxidored_YqcD_prd"/>
    <property type="match status" value="1"/>
</dbReference>
<dbReference type="SUPFAM" id="SSF55620">
    <property type="entry name" value="Tetrahydrobiopterin biosynthesis enzymes-like"/>
    <property type="match status" value="1"/>
</dbReference>
<feature type="chain" id="PRO_1000213076" description="NADPH-dependent 7-cyano-7-deazaguanine reductase">
    <location>
        <begin position="1"/>
        <end position="282"/>
    </location>
</feature>
<feature type="active site" description="Thioimide intermediate" evidence="1">
    <location>
        <position position="190"/>
    </location>
</feature>
<feature type="active site" description="Proton donor" evidence="1">
    <location>
        <position position="197"/>
    </location>
</feature>
<feature type="binding site" evidence="1">
    <location>
        <begin position="88"/>
        <end position="90"/>
    </location>
    <ligand>
        <name>substrate</name>
    </ligand>
</feature>
<feature type="binding site" evidence="1">
    <location>
        <begin position="90"/>
        <end position="91"/>
    </location>
    <ligand>
        <name>NADPH</name>
        <dbReference type="ChEBI" id="CHEBI:57783"/>
    </ligand>
</feature>
<feature type="binding site" evidence="1">
    <location>
        <begin position="229"/>
        <end position="230"/>
    </location>
    <ligand>
        <name>substrate</name>
    </ligand>
</feature>
<feature type="binding site" evidence="1">
    <location>
        <begin position="258"/>
        <end position="259"/>
    </location>
    <ligand>
        <name>NADPH</name>
        <dbReference type="ChEBI" id="CHEBI:57783"/>
    </ligand>
</feature>
<gene>
    <name evidence="1" type="primary">queF</name>
    <name type="ordered locus">SeD_A3290</name>
</gene>
<protein>
    <recommendedName>
        <fullName evidence="1">NADPH-dependent 7-cyano-7-deazaguanine reductase</fullName>
        <ecNumber evidence="1">1.7.1.13</ecNumber>
    </recommendedName>
    <alternativeName>
        <fullName evidence="1">7-cyano-7-carbaguanine reductase</fullName>
    </alternativeName>
    <alternativeName>
        <fullName evidence="1">NADPH-dependent nitrile oxidoreductase</fullName>
    </alternativeName>
    <alternativeName>
        <fullName evidence="1">PreQ(0) reductase</fullName>
    </alternativeName>
</protein>
<name>QUEF_SALDC</name>
<proteinExistence type="inferred from homology"/>
<comment type="function">
    <text evidence="1">Catalyzes the NADPH-dependent reduction of 7-cyano-7-deazaguanine (preQ0) to 7-aminomethyl-7-deazaguanine (preQ1).</text>
</comment>
<comment type="catalytic activity">
    <reaction evidence="1">
        <text>7-aminomethyl-7-carbaguanine + 2 NADP(+) = 7-cyano-7-deazaguanine + 2 NADPH + 3 H(+)</text>
        <dbReference type="Rhea" id="RHEA:13409"/>
        <dbReference type="ChEBI" id="CHEBI:15378"/>
        <dbReference type="ChEBI" id="CHEBI:45075"/>
        <dbReference type="ChEBI" id="CHEBI:57783"/>
        <dbReference type="ChEBI" id="CHEBI:58349"/>
        <dbReference type="ChEBI" id="CHEBI:58703"/>
        <dbReference type="EC" id="1.7.1.13"/>
    </reaction>
</comment>
<comment type="pathway">
    <text evidence="1">tRNA modification; tRNA-queuosine biosynthesis.</text>
</comment>
<comment type="subunit">
    <text evidence="1">Homodimer.</text>
</comment>
<comment type="subcellular location">
    <subcellularLocation>
        <location evidence="1">Cytoplasm</location>
    </subcellularLocation>
</comment>
<comment type="similarity">
    <text evidence="1">Belongs to the GTP cyclohydrolase I family. QueF type 2 subfamily.</text>
</comment>
<evidence type="ECO:0000255" key="1">
    <source>
        <dbReference type="HAMAP-Rule" id="MF_00817"/>
    </source>
</evidence>
<sequence>MSSYENHQALDGLTLGKSTDYRDNYDASLLQGVPRSLNRDPLGLTADNLPFHGADIWTLYELSWLNSQGLPQVAVGHVELDYTSVNLIESKSFKLYLNSFNQTRFDTWETVRQTLERDLRACAQGNVSVRLHRLDELEGQPVAHFHGTCIDDQDISIDNYQFTTDYLQHAVSGEKQVEETLVSHLLKSNCLITHQPDWGSIQIQYRGRKIDREKLLRYLVSFRHHNEFHEQCVERIFNDILRFCQPETLSVYARYTRRGGLDINPWRSNTDFVPATGRLARQ</sequence>
<organism>
    <name type="scientific">Salmonella dublin (strain CT_02021853)</name>
    <dbReference type="NCBI Taxonomy" id="439851"/>
    <lineage>
        <taxon>Bacteria</taxon>
        <taxon>Pseudomonadati</taxon>
        <taxon>Pseudomonadota</taxon>
        <taxon>Gammaproteobacteria</taxon>
        <taxon>Enterobacterales</taxon>
        <taxon>Enterobacteriaceae</taxon>
        <taxon>Salmonella</taxon>
    </lineage>
</organism>
<accession>B5FTX0</accession>